<accession>A0RM17</accession>
<keyword id="KW-0687">Ribonucleoprotein</keyword>
<keyword id="KW-0689">Ribosomal protein</keyword>
<keyword id="KW-0694">RNA-binding</keyword>
<keyword id="KW-0699">rRNA-binding</keyword>
<dbReference type="EMBL" id="CP000487">
    <property type="protein sequence ID" value="ABK81947.1"/>
    <property type="molecule type" value="Genomic_DNA"/>
</dbReference>
<dbReference type="RefSeq" id="WP_002847979.1">
    <property type="nucleotide sequence ID" value="NC_008599.1"/>
</dbReference>
<dbReference type="SMR" id="A0RM17"/>
<dbReference type="GeneID" id="61063883"/>
<dbReference type="KEGG" id="cff:CFF8240_0040"/>
<dbReference type="eggNOG" id="COG0092">
    <property type="taxonomic scope" value="Bacteria"/>
</dbReference>
<dbReference type="HOGENOM" id="CLU_058591_0_2_7"/>
<dbReference type="Proteomes" id="UP000000760">
    <property type="component" value="Chromosome"/>
</dbReference>
<dbReference type="GO" id="GO:0022627">
    <property type="term" value="C:cytosolic small ribosomal subunit"/>
    <property type="evidence" value="ECO:0007669"/>
    <property type="project" value="TreeGrafter"/>
</dbReference>
<dbReference type="GO" id="GO:0003729">
    <property type="term" value="F:mRNA binding"/>
    <property type="evidence" value="ECO:0007669"/>
    <property type="project" value="UniProtKB-UniRule"/>
</dbReference>
<dbReference type="GO" id="GO:0019843">
    <property type="term" value="F:rRNA binding"/>
    <property type="evidence" value="ECO:0007669"/>
    <property type="project" value="UniProtKB-UniRule"/>
</dbReference>
<dbReference type="GO" id="GO:0003735">
    <property type="term" value="F:structural constituent of ribosome"/>
    <property type="evidence" value="ECO:0007669"/>
    <property type="project" value="InterPro"/>
</dbReference>
<dbReference type="GO" id="GO:0006412">
    <property type="term" value="P:translation"/>
    <property type="evidence" value="ECO:0007669"/>
    <property type="project" value="UniProtKB-UniRule"/>
</dbReference>
<dbReference type="CDD" id="cd02412">
    <property type="entry name" value="KH-II_30S_S3"/>
    <property type="match status" value="1"/>
</dbReference>
<dbReference type="FunFam" id="3.30.1140.32:FF:000006">
    <property type="entry name" value="30S ribosomal protein S3"/>
    <property type="match status" value="1"/>
</dbReference>
<dbReference type="FunFam" id="3.30.300.20:FF:000001">
    <property type="entry name" value="30S ribosomal protein S3"/>
    <property type="match status" value="1"/>
</dbReference>
<dbReference type="Gene3D" id="3.30.300.20">
    <property type="match status" value="1"/>
</dbReference>
<dbReference type="Gene3D" id="3.30.1140.32">
    <property type="entry name" value="Ribosomal protein S3, C-terminal domain"/>
    <property type="match status" value="1"/>
</dbReference>
<dbReference type="HAMAP" id="MF_01309_B">
    <property type="entry name" value="Ribosomal_uS3_B"/>
    <property type="match status" value="1"/>
</dbReference>
<dbReference type="InterPro" id="IPR004087">
    <property type="entry name" value="KH_dom"/>
</dbReference>
<dbReference type="InterPro" id="IPR015946">
    <property type="entry name" value="KH_dom-like_a/b"/>
</dbReference>
<dbReference type="InterPro" id="IPR004044">
    <property type="entry name" value="KH_dom_type_2"/>
</dbReference>
<dbReference type="InterPro" id="IPR009019">
    <property type="entry name" value="KH_sf_prok-type"/>
</dbReference>
<dbReference type="InterPro" id="IPR036419">
    <property type="entry name" value="Ribosomal_S3_C_sf"/>
</dbReference>
<dbReference type="InterPro" id="IPR005704">
    <property type="entry name" value="Ribosomal_uS3_bac-typ"/>
</dbReference>
<dbReference type="InterPro" id="IPR001351">
    <property type="entry name" value="Ribosomal_uS3_C"/>
</dbReference>
<dbReference type="InterPro" id="IPR018280">
    <property type="entry name" value="Ribosomal_uS3_CS"/>
</dbReference>
<dbReference type="NCBIfam" id="TIGR01009">
    <property type="entry name" value="rpsC_bact"/>
    <property type="match status" value="1"/>
</dbReference>
<dbReference type="PANTHER" id="PTHR11760">
    <property type="entry name" value="30S/40S RIBOSOMAL PROTEIN S3"/>
    <property type="match status" value="1"/>
</dbReference>
<dbReference type="PANTHER" id="PTHR11760:SF19">
    <property type="entry name" value="SMALL RIBOSOMAL SUBUNIT PROTEIN US3C"/>
    <property type="match status" value="1"/>
</dbReference>
<dbReference type="Pfam" id="PF07650">
    <property type="entry name" value="KH_2"/>
    <property type="match status" value="1"/>
</dbReference>
<dbReference type="Pfam" id="PF00189">
    <property type="entry name" value="Ribosomal_S3_C"/>
    <property type="match status" value="1"/>
</dbReference>
<dbReference type="SMART" id="SM00322">
    <property type="entry name" value="KH"/>
    <property type="match status" value="1"/>
</dbReference>
<dbReference type="SUPFAM" id="SSF54814">
    <property type="entry name" value="Prokaryotic type KH domain (KH-domain type II)"/>
    <property type="match status" value="1"/>
</dbReference>
<dbReference type="SUPFAM" id="SSF54821">
    <property type="entry name" value="Ribosomal protein S3 C-terminal domain"/>
    <property type="match status" value="1"/>
</dbReference>
<dbReference type="PROSITE" id="PS50823">
    <property type="entry name" value="KH_TYPE_2"/>
    <property type="match status" value="1"/>
</dbReference>
<dbReference type="PROSITE" id="PS00548">
    <property type="entry name" value="RIBOSOMAL_S3"/>
    <property type="match status" value="1"/>
</dbReference>
<organism>
    <name type="scientific">Campylobacter fetus subsp. fetus (strain 82-40)</name>
    <dbReference type="NCBI Taxonomy" id="360106"/>
    <lineage>
        <taxon>Bacteria</taxon>
        <taxon>Pseudomonadati</taxon>
        <taxon>Campylobacterota</taxon>
        <taxon>Epsilonproteobacteria</taxon>
        <taxon>Campylobacterales</taxon>
        <taxon>Campylobacteraceae</taxon>
        <taxon>Campylobacter</taxon>
    </lineage>
</organism>
<proteinExistence type="inferred from homology"/>
<gene>
    <name evidence="1" type="primary">rpsC</name>
    <name type="ordered locus">CFF8240_0040</name>
</gene>
<reference key="1">
    <citation type="submission" date="2006-11" db="EMBL/GenBank/DDBJ databases">
        <title>Sequence of Campylobacter fetus subsp. fetus 82-40.</title>
        <authorList>
            <person name="Fouts D.E."/>
            <person name="Nelson K.E."/>
        </authorList>
    </citation>
    <scope>NUCLEOTIDE SEQUENCE [LARGE SCALE GENOMIC DNA]</scope>
    <source>
        <strain>82-40</strain>
    </source>
</reference>
<evidence type="ECO:0000255" key="1">
    <source>
        <dbReference type="HAMAP-Rule" id="MF_01309"/>
    </source>
</evidence>
<evidence type="ECO:0000256" key="2">
    <source>
        <dbReference type="SAM" id="MobiDB-lite"/>
    </source>
</evidence>
<evidence type="ECO:0000305" key="3"/>
<sequence length="232" mass="25920">MGQKVNPIGLRLGINRNWESRWFPSKATLPENIGEDYKIRKFLKTKLYYAGVSQILVERTAKKLRVTVVAARPGIIIGKKGGEIENLRSEVTKLVNKDIAINIKEERKAGSSAQLAAENVAMQLERRVAFRRAMKKVIQGAQKAGAKGIKVSVAGRLGGAEMARTEWYLEGRVPLHTLRARIDYGFAEAHTTYGNIGVKVWIFKGEVLQKGIQADKNEDTSPKKPRRARRGK</sequence>
<name>RS3_CAMFF</name>
<feature type="chain" id="PRO_0000293768" description="Small ribosomal subunit protein uS3">
    <location>
        <begin position="1"/>
        <end position="232"/>
    </location>
</feature>
<feature type="domain" description="KH type-2" evidence="1">
    <location>
        <begin position="39"/>
        <end position="107"/>
    </location>
</feature>
<feature type="region of interest" description="Disordered" evidence="2">
    <location>
        <begin position="213"/>
        <end position="232"/>
    </location>
</feature>
<feature type="compositionally biased region" description="Basic and acidic residues" evidence="2">
    <location>
        <begin position="213"/>
        <end position="222"/>
    </location>
</feature>
<feature type="compositionally biased region" description="Basic residues" evidence="2">
    <location>
        <begin position="223"/>
        <end position="232"/>
    </location>
</feature>
<comment type="function">
    <text evidence="1">Binds the lower part of the 30S subunit head. Binds mRNA in the 70S ribosome, positioning it for translation.</text>
</comment>
<comment type="subunit">
    <text evidence="1">Part of the 30S ribosomal subunit. Forms a tight complex with proteins S10 and S14.</text>
</comment>
<comment type="similarity">
    <text evidence="1">Belongs to the universal ribosomal protein uS3 family.</text>
</comment>
<protein>
    <recommendedName>
        <fullName evidence="1">Small ribosomal subunit protein uS3</fullName>
    </recommendedName>
    <alternativeName>
        <fullName evidence="3">30S ribosomal protein S3</fullName>
    </alternativeName>
</protein>